<protein>
    <recommendedName>
        <fullName evidence="1">Urease accessory protein UreG 3</fullName>
    </recommendedName>
</protein>
<organism>
    <name type="scientific">Streptomyces griseus subsp. griseus (strain JCM 4626 / CBS 651.72 / NBRC 13350 / KCC S-0626 / ISP 5235)</name>
    <dbReference type="NCBI Taxonomy" id="455632"/>
    <lineage>
        <taxon>Bacteria</taxon>
        <taxon>Bacillati</taxon>
        <taxon>Actinomycetota</taxon>
        <taxon>Actinomycetes</taxon>
        <taxon>Kitasatosporales</taxon>
        <taxon>Streptomycetaceae</taxon>
        <taxon>Streptomyces</taxon>
    </lineage>
</organism>
<keyword id="KW-0143">Chaperone</keyword>
<keyword id="KW-0963">Cytoplasm</keyword>
<keyword id="KW-0342">GTP-binding</keyword>
<keyword id="KW-0996">Nickel insertion</keyword>
<keyword id="KW-0547">Nucleotide-binding</keyword>
<proteinExistence type="inferred from homology"/>
<gene>
    <name evidence="1" type="primary">ureG3</name>
    <name type="ordered locus">SGR_234</name>
</gene>
<sequence length="250" mass="26153">MPDNASAQQPGQPAQGPNEHYHQPLNQPRALRIGVAGPVGTGKSSILATLCRELAGELSMAVVTNDIYTDEDARFLRSAGVLPTERIRAVETGACPHTAIRDDVSANLDAVEDLEEAYGPLDLVLIESGGDNLTATFSPALADAQLFSIDVAGGGDVARKGGPGITGADLLVINKTDLAPHVEVDVTAMVADAERARDGLPVLALSKHDPESIARLADWVRAVLVRHRSGTHVPTDPGPMAPHSHSHDGS</sequence>
<dbReference type="EMBL" id="AP009493">
    <property type="protein sequence ID" value="BAG17063.1"/>
    <property type="molecule type" value="Genomic_DNA"/>
</dbReference>
<dbReference type="SMR" id="B1VNP0"/>
<dbReference type="KEGG" id="sgr:SGR_234"/>
<dbReference type="PATRIC" id="fig|455632.4.peg.213"/>
<dbReference type="eggNOG" id="COG0378">
    <property type="taxonomic scope" value="Bacteria"/>
</dbReference>
<dbReference type="HOGENOM" id="CLU_072144_1_0_11"/>
<dbReference type="Proteomes" id="UP000001685">
    <property type="component" value="Chromosome"/>
</dbReference>
<dbReference type="GO" id="GO:0005737">
    <property type="term" value="C:cytoplasm"/>
    <property type="evidence" value="ECO:0007669"/>
    <property type="project" value="UniProtKB-SubCell"/>
</dbReference>
<dbReference type="GO" id="GO:0005525">
    <property type="term" value="F:GTP binding"/>
    <property type="evidence" value="ECO:0007669"/>
    <property type="project" value="UniProtKB-KW"/>
</dbReference>
<dbReference type="GO" id="GO:0003924">
    <property type="term" value="F:GTPase activity"/>
    <property type="evidence" value="ECO:0007669"/>
    <property type="project" value="InterPro"/>
</dbReference>
<dbReference type="GO" id="GO:0016151">
    <property type="term" value="F:nickel cation binding"/>
    <property type="evidence" value="ECO:0007669"/>
    <property type="project" value="UniProtKB-UniRule"/>
</dbReference>
<dbReference type="GO" id="GO:0043419">
    <property type="term" value="P:urea catabolic process"/>
    <property type="evidence" value="ECO:0007669"/>
    <property type="project" value="InterPro"/>
</dbReference>
<dbReference type="Gene3D" id="3.40.50.300">
    <property type="entry name" value="P-loop containing nucleotide triphosphate hydrolases"/>
    <property type="match status" value="1"/>
</dbReference>
<dbReference type="HAMAP" id="MF_01389">
    <property type="entry name" value="UreG"/>
    <property type="match status" value="1"/>
</dbReference>
<dbReference type="InterPro" id="IPR003495">
    <property type="entry name" value="CobW/HypB/UreG_nucleotide-bd"/>
</dbReference>
<dbReference type="InterPro" id="IPR027417">
    <property type="entry name" value="P-loop_NTPase"/>
</dbReference>
<dbReference type="InterPro" id="IPR004400">
    <property type="entry name" value="UreG"/>
</dbReference>
<dbReference type="NCBIfam" id="TIGR00101">
    <property type="entry name" value="ureG"/>
    <property type="match status" value="1"/>
</dbReference>
<dbReference type="PANTHER" id="PTHR31715">
    <property type="entry name" value="UREASE ACCESSORY PROTEIN G"/>
    <property type="match status" value="1"/>
</dbReference>
<dbReference type="PANTHER" id="PTHR31715:SF0">
    <property type="entry name" value="UREASE ACCESSORY PROTEIN G"/>
    <property type="match status" value="1"/>
</dbReference>
<dbReference type="Pfam" id="PF02492">
    <property type="entry name" value="cobW"/>
    <property type="match status" value="1"/>
</dbReference>
<dbReference type="PIRSF" id="PIRSF005624">
    <property type="entry name" value="Ni-bind_GTPase"/>
    <property type="match status" value="1"/>
</dbReference>
<dbReference type="SUPFAM" id="SSF52540">
    <property type="entry name" value="P-loop containing nucleoside triphosphate hydrolases"/>
    <property type="match status" value="1"/>
</dbReference>
<comment type="function">
    <text evidence="1">Facilitates the functional incorporation of the urease nickel metallocenter. This process requires GTP hydrolysis, probably effectuated by UreG.</text>
</comment>
<comment type="subunit">
    <text evidence="1">Homodimer. UreD, UreF and UreG form a complex that acts as a GTP-hydrolysis-dependent molecular chaperone, activating the urease apoprotein by helping to assemble the nickel containing metallocenter of UreC. The UreE protein probably delivers the nickel.</text>
</comment>
<comment type="subcellular location">
    <subcellularLocation>
        <location evidence="1">Cytoplasm</location>
    </subcellularLocation>
</comment>
<comment type="similarity">
    <text evidence="1">Belongs to the SIMIBI class G3E GTPase family. UreG subfamily.</text>
</comment>
<reference key="1">
    <citation type="journal article" date="2008" name="J. Bacteriol.">
        <title>Genome sequence of the streptomycin-producing microorganism Streptomyces griseus IFO 13350.</title>
        <authorList>
            <person name="Ohnishi Y."/>
            <person name="Ishikawa J."/>
            <person name="Hara H."/>
            <person name="Suzuki H."/>
            <person name="Ikenoya M."/>
            <person name="Ikeda H."/>
            <person name="Yamashita A."/>
            <person name="Hattori M."/>
            <person name="Horinouchi S."/>
        </authorList>
    </citation>
    <scope>NUCLEOTIDE SEQUENCE [LARGE SCALE GENOMIC DNA]</scope>
    <source>
        <strain>JCM 4626 / CBS 651.72 / NBRC 13350 / KCC S-0626 / ISP 5235</strain>
    </source>
</reference>
<evidence type="ECO:0000255" key="1">
    <source>
        <dbReference type="HAMAP-Rule" id="MF_01389"/>
    </source>
</evidence>
<evidence type="ECO:0000256" key="2">
    <source>
        <dbReference type="SAM" id="MobiDB-lite"/>
    </source>
</evidence>
<feature type="chain" id="PRO_0000347452" description="Urease accessory protein UreG 3">
    <location>
        <begin position="1"/>
        <end position="250"/>
    </location>
</feature>
<feature type="region of interest" description="Disordered" evidence="2">
    <location>
        <begin position="1"/>
        <end position="24"/>
    </location>
</feature>
<feature type="region of interest" description="Disordered" evidence="2">
    <location>
        <begin position="230"/>
        <end position="250"/>
    </location>
</feature>
<feature type="compositionally biased region" description="Low complexity" evidence="2">
    <location>
        <begin position="7"/>
        <end position="17"/>
    </location>
</feature>
<feature type="binding site" evidence="1">
    <location>
        <begin position="37"/>
        <end position="44"/>
    </location>
    <ligand>
        <name>GTP</name>
        <dbReference type="ChEBI" id="CHEBI:37565"/>
    </ligand>
</feature>
<accession>B1VNP0</accession>
<name>UREG3_STRGG</name>